<reference key="1">
    <citation type="submission" date="2009-03" db="EMBL/GenBank/DDBJ databases">
        <title>Brucella melitensis ATCC 23457 whole genome shotgun sequencing project.</title>
        <authorList>
            <person name="Setubal J.C."/>
            <person name="Boyle S."/>
            <person name="Crasta O.R."/>
            <person name="Gillespie J.J."/>
            <person name="Kenyon R.W."/>
            <person name="Lu J."/>
            <person name="Mane S."/>
            <person name="Nagrani S."/>
            <person name="Shallom J.M."/>
            <person name="Shallom S."/>
            <person name="Shukla M."/>
            <person name="Snyder E.E."/>
            <person name="Sobral B.W."/>
            <person name="Wattam A.R."/>
            <person name="Will R."/>
            <person name="Williams K."/>
            <person name="Yoo H."/>
            <person name="Munk C."/>
            <person name="Tapia R."/>
            <person name="Han C."/>
            <person name="Detter J.C."/>
            <person name="Bruce D."/>
            <person name="Brettin T.S."/>
        </authorList>
    </citation>
    <scope>NUCLEOTIDE SEQUENCE [LARGE SCALE GENOMIC DNA]</scope>
    <source>
        <strain>ATCC 23457</strain>
    </source>
</reference>
<accession>C0RJD8</accession>
<evidence type="ECO:0000255" key="1">
    <source>
        <dbReference type="HAMAP-Rule" id="MF_00302"/>
    </source>
</evidence>
<evidence type="ECO:0000256" key="2">
    <source>
        <dbReference type="SAM" id="MobiDB-lite"/>
    </source>
</evidence>
<proteinExistence type="inferred from homology"/>
<organism>
    <name type="scientific">Brucella melitensis biotype 2 (strain ATCC 23457)</name>
    <dbReference type="NCBI Taxonomy" id="546272"/>
    <lineage>
        <taxon>Bacteria</taxon>
        <taxon>Pseudomonadati</taxon>
        <taxon>Pseudomonadota</taxon>
        <taxon>Alphaproteobacteria</taxon>
        <taxon>Hyphomicrobiales</taxon>
        <taxon>Brucellaceae</taxon>
        <taxon>Brucella/Ochrobactrum group</taxon>
        <taxon>Brucella</taxon>
    </lineage>
</organism>
<protein>
    <recommendedName>
        <fullName evidence="1">ATP-dependent Clp protease adapter protein ClpS</fullName>
    </recommendedName>
</protein>
<dbReference type="EMBL" id="CP001488">
    <property type="protein sequence ID" value="ACO00946.1"/>
    <property type="molecule type" value="Genomic_DNA"/>
</dbReference>
<dbReference type="RefSeq" id="WP_004686968.1">
    <property type="nucleotide sequence ID" value="NC_012441.1"/>
</dbReference>
<dbReference type="SMR" id="C0RJD8"/>
<dbReference type="GeneID" id="29593633"/>
<dbReference type="KEGG" id="bmi:BMEA_A1213"/>
<dbReference type="HOGENOM" id="CLU_134358_0_0_5"/>
<dbReference type="Proteomes" id="UP000001748">
    <property type="component" value="Chromosome I"/>
</dbReference>
<dbReference type="GO" id="GO:0030163">
    <property type="term" value="P:protein catabolic process"/>
    <property type="evidence" value="ECO:0007669"/>
    <property type="project" value="InterPro"/>
</dbReference>
<dbReference type="GO" id="GO:0006508">
    <property type="term" value="P:proteolysis"/>
    <property type="evidence" value="ECO:0007669"/>
    <property type="project" value="UniProtKB-UniRule"/>
</dbReference>
<dbReference type="FunFam" id="3.30.1390.10:FF:000002">
    <property type="entry name" value="ATP-dependent Clp protease adapter protein ClpS"/>
    <property type="match status" value="1"/>
</dbReference>
<dbReference type="Gene3D" id="3.30.1390.10">
    <property type="match status" value="1"/>
</dbReference>
<dbReference type="HAMAP" id="MF_00302">
    <property type="entry name" value="ClpS"/>
    <property type="match status" value="1"/>
</dbReference>
<dbReference type="InterPro" id="IPR022935">
    <property type="entry name" value="ClpS"/>
</dbReference>
<dbReference type="InterPro" id="IPR003769">
    <property type="entry name" value="ClpS_core"/>
</dbReference>
<dbReference type="InterPro" id="IPR014719">
    <property type="entry name" value="Ribosomal_bL12_C/ClpS-like"/>
</dbReference>
<dbReference type="NCBIfam" id="NF000669">
    <property type="entry name" value="PRK00033.1-2"/>
    <property type="match status" value="1"/>
</dbReference>
<dbReference type="NCBIfam" id="NF000672">
    <property type="entry name" value="PRK00033.1-5"/>
    <property type="match status" value="1"/>
</dbReference>
<dbReference type="PANTHER" id="PTHR33473:SF19">
    <property type="entry name" value="ATP-DEPENDENT CLP PROTEASE ADAPTER PROTEIN CLPS"/>
    <property type="match status" value="1"/>
</dbReference>
<dbReference type="PANTHER" id="PTHR33473">
    <property type="entry name" value="ATP-DEPENDENT CLP PROTEASE ADAPTER PROTEIN CLPS1, CHLOROPLASTIC"/>
    <property type="match status" value="1"/>
</dbReference>
<dbReference type="Pfam" id="PF02617">
    <property type="entry name" value="ClpS"/>
    <property type="match status" value="1"/>
</dbReference>
<dbReference type="SUPFAM" id="SSF54736">
    <property type="entry name" value="ClpS-like"/>
    <property type="match status" value="1"/>
</dbReference>
<feature type="chain" id="PRO_1000132803" description="ATP-dependent Clp protease adapter protein ClpS">
    <location>
        <begin position="1"/>
        <end position="116"/>
    </location>
</feature>
<feature type="region of interest" description="Disordered" evidence="2">
    <location>
        <begin position="1"/>
        <end position="23"/>
    </location>
</feature>
<feature type="compositionally biased region" description="Polar residues" evidence="2">
    <location>
        <begin position="1"/>
        <end position="11"/>
    </location>
</feature>
<gene>
    <name evidence="1" type="primary">clpS</name>
    <name type="ordered locus">BMEA_A1213</name>
</gene>
<sequence length="116" mass="13337">MRRFNTIMQGKTNGGNGPESGTVVVTRTQPKTRKPSLYRVLLLNDDYTPMEFVVHVLQRFFQKNLDDATRIMLHVHNHGVGECGVFTYEVAETKVSQVMDFARQNQHPLQCVMEKK</sequence>
<name>CLPS_BRUMB</name>
<comment type="function">
    <text evidence="1">Involved in the modulation of the specificity of the ClpAP-mediated ATP-dependent protein degradation.</text>
</comment>
<comment type="subunit">
    <text evidence="1">Binds to the N-terminal domain of the chaperone ClpA.</text>
</comment>
<comment type="similarity">
    <text evidence="1">Belongs to the ClpS family.</text>
</comment>